<keyword id="KW-0004">4Fe-4S</keyword>
<keyword id="KW-0028">Amino-acid biosynthesis</keyword>
<keyword id="KW-0100">Branched-chain amino acid biosynthesis</keyword>
<keyword id="KW-0408">Iron</keyword>
<keyword id="KW-0411">Iron-sulfur</keyword>
<keyword id="KW-0432">Leucine biosynthesis</keyword>
<keyword id="KW-0456">Lyase</keyword>
<keyword id="KW-0479">Metal-binding</keyword>
<keyword id="KW-1185">Reference proteome</keyword>
<proteinExistence type="inferred from homology"/>
<name>LEUC_SYNY3</name>
<comment type="function">
    <text evidence="1">Catalyzes the isomerization between 2-isopropylmalate and 3-isopropylmalate, via the formation of 2-isopropylmaleate.</text>
</comment>
<comment type="catalytic activity">
    <reaction evidence="1">
        <text>(2R,3S)-3-isopropylmalate = (2S)-2-isopropylmalate</text>
        <dbReference type="Rhea" id="RHEA:32287"/>
        <dbReference type="ChEBI" id="CHEBI:1178"/>
        <dbReference type="ChEBI" id="CHEBI:35121"/>
        <dbReference type="EC" id="4.2.1.33"/>
    </reaction>
</comment>
<comment type="cofactor">
    <cofactor evidence="1">
        <name>[4Fe-4S] cluster</name>
        <dbReference type="ChEBI" id="CHEBI:49883"/>
    </cofactor>
    <text evidence="1">Binds 1 [4Fe-4S] cluster per subunit.</text>
</comment>
<comment type="pathway">
    <text evidence="1">Amino-acid biosynthesis; L-leucine biosynthesis; L-leucine from 3-methyl-2-oxobutanoate: step 2/4.</text>
</comment>
<comment type="subunit">
    <text evidence="1">Heterodimer of LeuC and LeuD.</text>
</comment>
<comment type="similarity">
    <text evidence="1">Belongs to the aconitase/IPM isomerase family. LeuC type 1 subfamily.</text>
</comment>
<accession>P54384</accession>
<dbReference type="EC" id="4.2.1.33" evidence="1"/>
<dbReference type="EMBL" id="BA000022">
    <property type="protein sequence ID" value="BAA18738.1"/>
    <property type="molecule type" value="Genomic_DNA"/>
</dbReference>
<dbReference type="EMBL" id="U32936">
    <property type="protein sequence ID" value="AAB41277.1"/>
    <property type="molecule type" value="Genomic_DNA"/>
</dbReference>
<dbReference type="PIR" id="S76826">
    <property type="entry name" value="S76826"/>
</dbReference>
<dbReference type="SMR" id="P54384"/>
<dbReference type="FunCoup" id="P54384">
    <property type="interactions" value="428"/>
</dbReference>
<dbReference type="STRING" id="1148.gene:10500510"/>
<dbReference type="PaxDb" id="1148-1653827"/>
<dbReference type="EnsemblBacteria" id="BAA18738">
    <property type="protein sequence ID" value="BAA18738"/>
    <property type="gene ID" value="BAA18738"/>
</dbReference>
<dbReference type="KEGG" id="syn:sll1470"/>
<dbReference type="eggNOG" id="COG0065">
    <property type="taxonomic scope" value="Bacteria"/>
</dbReference>
<dbReference type="InParanoid" id="P54384"/>
<dbReference type="PhylomeDB" id="P54384"/>
<dbReference type="UniPathway" id="UPA00048">
    <property type="reaction ID" value="UER00071"/>
</dbReference>
<dbReference type="Proteomes" id="UP000001425">
    <property type="component" value="Chromosome"/>
</dbReference>
<dbReference type="GO" id="GO:0003861">
    <property type="term" value="F:3-isopropylmalate dehydratase activity"/>
    <property type="evidence" value="ECO:0007669"/>
    <property type="project" value="UniProtKB-UniRule"/>
</dbReference>
<dbReference type="GO" id="GO:0051539">
    <property type="term" value="F:4 iron, 4 sulfur cluster binding"/>
    <property type="evidence" value="ECO:0007669"/>
    <property type="project" value="UniProtKB-KW"/>
</dbReference>
<dbReference type="GO" id="GO:0046872">
    <property type="term" value="F:metal ion binding"/>
    <property type="evidence" value="ECO:0007669"/>
    <property type="project" value="UniProtKB-KW"/>
</dbReference>
<dbReference type="GO" id="GO:0009098">
    <property type="term" value="P:L-leucine biosynthetic process"/>
    <property type="evidence" value="ECO:0007669"/>
    <property type="project" value="UniProtKB-UniRule"/>
</dbReference>
<dbReference type="CDD" id="cd01583">
    <property type="entry name" value="IPMI"/>
    <property type="match status" value="1"/>
</dbReference>
<dbReference type="Gene3D" id="3.30.499.10">
    <property type="entry name" value="Aconitase, domain 3"/>
    <property type="match status" value="2"/>
</dbReference>
<dbReference type="HAMAP" id="MF_01026">
    <property type="entry name" value="LeuC_type1"/>
    <property type="match status" value="1"/>
</dbReference>
<dbReference type="InterPro" id="IPR004430">
    <property type="entry name" value="3-IsopropMal_deHydase_lsu"/>
</dbReference>
<dbReference type="InterPro" id="IPR015931">
    <property type="entry name" value="Acnase/IPM_dHydase_lsu_aba_1/3"/>
</dbReference>
<dbReference type="InterPro" id="IPR001030">
    <property type="entry name" value="Acoase/IPM_deHydtase_lsu_aba"/>
</dbReference>
<dbReference type="InterPro" id="IPR018136">
    <property type="entry name" value="Aconitase_4Fe-4S_BS"/>
</dbReference>
<dbReference type="InterPro" id="IPR036008">
    <property type="entry name" value="Aconitase_4Fe-4S_dom"/>
</dbReference>
<dbReference type="InterPro" id="IPR050067">
    <property type="entry name" value="IPM_dehydratase_rel_enz"/>
</dbReference>
<dbReference type="InterPro" id="IPR033941">
    <property type="entry name" value="IPMI_cat"/>
</dbReference>
<dbReference type="NCBIfam" id="TIGR00170">
    <property type="entry name" value="leuC"/>
    <property type="match status" value="1"/>
</dbReference>
<dbReference type="NCBIfam" id="NF004016">
    <property type="entry name" value="PRK05478.1"/>
    <property type="match status" value="1"/>
</dbReference>
<dbReference type="NCBIfam" id="NF009116">
    <property type="entry name" value="PRK12466.1"/>
    <property type="match status" value="1"/>
</dbReference>
<dbReference type="PANTHER" id="PTHR43822:SF9">
    <property type="entry name" value="3-ISOPROPYLMALATE DEHYDRATASE"/>
    <property type="match status" value="1"/>
</dbReference>
<dbReference type="PANTHER" id="PTHR43822">
    <property type="entry name" value="HOMOACONITASE, MITOCHONDRIAL-RELATED"/>
    <property type="match status" value="1"/>
</dbReference>
<dbReference type="Pfam" id="PF00330">
    <property type="entry name" value="Aconitase"/>
    <property type="match status" value="1"/>
</dbReference>
<dbReference type="PRINTS" id="PR00415">
    <property type="entry name" value="ACONITASE"/>
</dbReference>
<dbReference type="SUPFAM" id="SSF53732">
    <property type="entry name" value="Aconitase iron-sulfur domain"/>
    <property type="match status" value="1"/>
</dbReference>
<dbReference type="PROSITE" id="PS00450">
    <property type="entry name" value="ACONITASE_1"/>
    <property type="match status" value="1"/>
</dbReference>
<dbReference type="PROSITE" id="PS01244">
    <property type="entry name" value="ACONITASE_2"/>
    <property type="match status" value="1"/>
</dbReference>
<feature type="chain" id="PRO_0000076831" description="3-isopropylmalate dehydratase large subunit">
    <location>
        <begin position="1"/>
        <end position="468"/>
    </location>
</feature>
<feature type="binding site" evidence="1">
    <location>
        <position position="347"/>
    </location>
    <ligand>
        <name>[4Fe-4S] cluster</name>
        <dbReference type="ChEBI" id="CHEBI:49883"/>
    </ligand>
</feature>
<feature type="binding site" evidence="1">
    <location>
        <position position="407"/>
    </location>
    <ligand>
        <name>[4Fe-4S] cluster</name>
        <dbReference type="ChEBI" id="CHEBI:49883"/>
    </ligand>
</feature>
<feature type="binding site" evidence="1">
    <location>
        <position position="410"/>
    </location>
    <ligand>
        <name>[4Fe-4S] cluster</name>
        <dbReference type="ChEBI" id="CHEBI:49883"/>
    </ligand>
</feature>
<sequence>MSARTLFDKVWDLHTISVLPSGQTQLFIGLHLIHEVTSPQAFAMLKERGLRVMYPERTVATVDHIVPTENQQRPFQDSLAEEMMQALEVNTKAHNIRFHPIGSGNQGIVHVIAPEQGLTQPGMTIACGDSHTSTHGAFGAIAFGIGTSQVRDVLAAQSLSLNKLKVRKIEVNGDLAPGVYAKDVILHIIRKLGVKGGVGYAYEYAGSTFVAMNMEERMTVCNMSIEGGARCGYINPDEVTFAYLKGREFAPQGEDWDKAVQWWRSIASEPDAVYDDVVSFRAEDIEPTVTWGITPGQGIGISEPVPTLDSLNPDDQAIASEAYKYMQFQPGQPLKGTKVDVCFIGSCTNGRLSDLEEAAKVAKGHQVAAGVKAFVVPGSEQVKQQAEAAGLDQIFQAAGFEWREAGCSMCLAMNPDKLQGDQLSASSSNRNFKGRQGSASGRTLLMSPAMVAAAAITGQVADVREVLG</sequence>
<evidence type="ECO:0000255" key="1">
    <source>
        <dbReference type="HAMAP-Rule" id="MF_01026"/>
    </source>
</evidence>
<protein>
    <recommendedName>
        <fullName evidence="1">3-isopropylmalate dehydratase large subunit</fullName>
        <ecNumber evidence="1">4.2.1.33</ecNumber>
    </recommendedName>
    <alternativeName>
        <fullName evidence="1">Alpha-IPM isomerase</fullName>
        <shortName evidence="1">IPMI</shortName>
    </alternativeName>
    <alternativeName>
        <fullName evidence="1">Isopropylmalate isomerase</fullName>
    </alternativeName>
</protein>
<organism>
    <name type="scientific">Synechocystis sp. (strain ATCC 27184 / PCC 6803 / Kazusa)</name>
    <dbReference type="NCBI Taxonomy" id="1111708"/>
    <lineage>
        <taxon>Bacteria</taxon>
        <taxon>Bacillati</taxon>
        <taxon>Cyanobacteriota</taxon>
        <taxon>Cyanophyceae</taxon>
        <taxon>Synechococcales</taxon>
        <taxon>Merismopediaceae</taxon>
        <taxon>Synechocystis</taxon>
    </lineage>
</organism>
<gene>
    <name evidence="1" type="primary">leuC</name>
    <name type="ordered locus">sll1470</name>
</gene>
<reference key="1">
    <citation type="journal article" date="1996" name="DNA Res.">
        <title>Sequence analysis of the genome of the unicellular cyanobacterium Synechocystis sp. strain PCC6803. II. Sequence determination of the entire genome and assignment of potential protein-coding regions.</title>
        <authorList>
            <person name="Kaneko T."/>
            <person name="Sato S."/>
            <person name="Kotani H."/>
            <person name="Tanaka A."/>
            <person name="Asamizu E."/>
            <person name="Nakamura Y."/>
            <person name="Miyajima N."/>
            <person name="Hirosawa M."/>
            <person name="Sugiura M."/>
            <person name="Sasamoto S."/>
            <person name="Kimura T."/>
            <person name="Hosouchi T."/>
            <person name="Matsuno A."/>
            <person name="Muraki A."/>
            <person name="Nakazaki N."/>
            <person name="Naruo K."/>
            <person name="Okumura S."/>
            <person name="Shimpo S."/>
            <person name="Takeuchi C."/>
            <person name="Wada T."/>
            <person name="Watanabe A."/>
            <person name="Yamada M."/>
            <person name="Yasuda M."/>
            <person name="Tabata S."/>
        </authorList>
    </citation>
    <scope>NUCLEOTIDE SEQUENCE [LARGE SCALE GENOMIC DNA]</scope>
    <source>
        <strain>ATCC 27184 / PCC 6803 / Kazusa</strain>
    </source>
</reference>
<reference key="2">
    <citation type="submission" date="1995-09" db="EMBL/GenBank/DDBJ databases">
        <authorList>
            <person name="Hagemann M."/>
            <person name="Richter S."/>
            <person name="Zuther E."/>
        </authorList>
    </citation>
    <scope>NUCLEOTIDE SEQUENCE [GENOMIC DNA] OF 1-373</scope>
</reference>